<dbReference type="EMBL" id="CP000254">
    <property type="protein sequence ID" value="ABD40412.1"/>
    <property type="molecule type" value="Genomic_DNA"/>
</dbReference>
<dbReference type="RefSeq" id="WP_011447696.1">
    <property type="nucleotide sequence ID" value="NC_007796.1"/>
</dbReference>
<dbReference type="SMR" id="Q2FQ32"/>
<dbReference type="FunCoup" id="Q2FQ32">
    <property type="interactions" value="136"/>
</dbReference>
<dbReference type="STRING" id="323259.Mhun_0656"/>
<dbReference type="EnsemblBacteria" id="ABD40412">
    <property type="protein sequence ID" value="ABD40412"/>
    <property type="gene ID" value="Mhun_0656"/>
</dbReference>
<dbReference type="GeneID" id="3923480"/>
<dbReference type="KEGG" id="mhu:Mhun_0656"/>
<dbReference type="eggNOG" id="arCOG04289">
    <property type="taxonomic scope" value="Archaea"/>
</dbReference>
<dbReference type="HOGENOM" id="CLU_062853_4_0_2"/>
<dbReference type="InParanoid" id="Q2FQ32"/>
<dbReference type="OrthoDB" id="10382at2157"/>
<dbReference type="Proteomes" id="UP000001941">
    <property type="component" value="Chromosome"/>
</dbReference>
<dbReference type="GO" id="GO:0015934">
    <property type="term" value="C:large ribosomal subunit"/>
    <property type="evidence" value="ECO:0007669"/>
    <property type="project" value="InterPro"/>
</dbReference>
<dbReference type="GO" id="GO:0019843">
    <property type="term" value="F:rRNA binding"/>
    <property type="evidence" value="ECO:0007669"/>
    <property type="project" value="UniProtKB-UniRule"/>
</dbReference>
<dbReference type="GO" id="GO:0003735">
    <property type="term" value="F:structural constituent of ribosome"/>
    <property type="evidence" value="ECO:0007669"/>
    <property type="project" value="InterPro"/>
</dbReference>
<dbReference type="GO" id="GO:0000049">
    <property type="term" value="F:tRNA binding"/>
    <property type="evidence" value="ECO:0007669"/>
    <property type="project" value="UniProtKB-KW"/>
</dbReference>
<dbReference type="GO" id="GO:0006417">
    <property type="term" value="P:regulation of translation"/>
    <property type="evidence" value="ECO:0007669"/>
    <property type="project" value="UniProtKB-KW"/>
</dbReference>
<dbReference type="GO" id="GO:0006412">
    <property type="term" value="P:translation"/>
    <property type="evidence" value="ECO:0007669"/>
    <property type="project" value="UniProtKB-UniRule"/>
</dbReference>
<dbReference type="CDD" id="cd00403">
    <property type="entry name" value="Ribosomal_L1"/>
    <property type="match status" value="1"/>
</dbReference>
<dbReference type="FunFam" id="3.40.50.790:FF:000005">
    <property type="entry name" value="50S ribosomal protein L1"/>
    <property type="match status" value="1"/>
</dbReference>
<dbReference type="Gene3D" id="3.30.190.20">
    <property type="match status" value="1"/>
</dbReference>
<dbReference type="Gene3D" id="3.40.50.790">
    <property type="match status" value="1"/>
</dbReference>
<dbReference type="HAMAP" id="MF_01318_A">
    <property type="entry name" value="Ribosomal_uL1_A"/>
    <property type="match status" value="1"/>
</dbReference>
<dbReference type="InterPro" id="IPR002143">
    <property type="entry name" value="Ribosomal_uL1"/>
</dbReference>
<dbReference type="InterPro" id="IPR023674">
    <property type="entry name" value="Ribosomal_uL1-like"/>
</dbReference>
<dbReference type="InterPro" id="IPR028364">
    <property type="entry name" value="Ribosomal_uL1/biogenesis"/>
</dbReference>
<dbReference type="InterPro" id="IPR016095">
    <property type="entry name" value="Ribosomal_uL1_3-a/b-sand"/>
</dbReference>
<dbReference type="InterPro" id="IPR023669">
    <property type="entry name" value="Ribosomal_uL1_arc"/>
</dbReference>
<dbReference type="InterPro" id="IPR023673">
    <property type="entry name" value="Ribosomal_uL1_CS"/>
</dbReference>
<dbReference type="NCBIfam" id="NF003244">
    <property type="entry name" value="PRK04203.1"/>
    <property type="match status" value="1"/>
</dbReference>
<dbReference type="PANTHER" id="PTHR36427">
    <property type="entry name" value="54S RIBOSOMAL PROTEIN L1, MITOCHONDRIAL"/>
    <property type="match status" value="1"/>
</dbReference>
<dbReference type="PANTHER" id="PTHR36427:SF3">
    <property type="entry name" value="LARGE RIBOSOMAL SUBUNIT PROTEIN UL1M"/>
    <property type="match status" value="1"/>
</dbReference>
<dbReference type="Pfam" id="PF00687">
    <property type="entry name" value="Ribosomal_L1"/>
    <property type="match status" value="1"/>
</dbReference>
<dbReference type="PIRSF" id="PIRSF002155">
    <property type="entry name" value="Ribosomal_L1"/>
    <property type="match status" value="1"/>
</dbReference>
<dbReference type="SUPFAM" id="SSF56808">
    <property type="entry name" value="Ribosomal protein L1"/>
    <property type="match status" value="1"/>
</dbReference>
<dbReference type="PROSITE" id="PS01199">
    <property type="entry name" value="RIBOSOMAL_L1"/>
    <property type="match status" value="1"/>
</dbReference>
<organism>
    <name type="scientific">Methanospirillum hungatei JF-1 (strain ATCC 27890 / DSM 864 / NBRC 100397 / JF-1)</name>
    <dbReference type="NCBI Taxonomy" id="323259"/>
    <lineage>
        <taxon>Archaea</taxon>
        <taxon>Methanobacteriati</taxon>
        <taxon>Methanobacteriota</taxon>
        <taxon>Stenosarchaea group</taxon>
        <taxon>Methanomicrobia</taxon>
        <taxon>Methanomicrobiales</taxon>
        <taxon>Methanospirillaceae</taxon>
        <taxon>Methanospirillum</taxon>
    </lineage>
</organism>
<evidence type="ECO:0000255" key="1">
    <source>
        <dbReference type="HAMAP-Rule" id="MF_01318"/>
    </source>
</evidence>
<evidence type="ECO:0000305" key="2"/>
<reference key="1">
    <citation type="journal article" date="2016" name="Stand. Genomic Sci.">
        <title>Complete genome sequence of Methanospirillum hungatei type strain JF1.</title>
        <authorList>
            <person name="Gunsalus R.P."/>
            <person name="Cook L.E."/>
            <person name="Crable B."/>
            <person name="Rohlin L."/>
            <person name="McDonald E."/>
            <person name="Mouttaki H."/>
            <person name="Sieber J.R."/>
            <person name="Poweleit N."/>
            <person name="Zhou H."/>
            <person name="Lapidus A.L."/>
            <person name="Daligault H.E."/>
            <person name="Land M."/>
            <person name="Gilna P."/>
            <person name="Ivanova N."/>
            <person name="Kyrpides N."/>
            <person name="Culley D.E."/>
            <person name="McInerney M.J."/>
        </authorList>
    </citation>
    <scope>NUCLEOTIDE SEQUENCE [LARGE SCALE GENOMIC DNA]</scope>
    <source>
        <strain>ATCC 27890 / DSM 864 / NBRC 100397 / JF-1</strain>
    </source>
</reference>
<keyword id="KW-1185">Reference proteome</keyword>
<keyword id="KW-0678">Repressor</keyword>
<keyword id="KW-0687">Ribonucleoprotein</keyword>
<keyword id="KW-0689">Ribosomal protein</keyword>
<keyword id="KW-0694">RNA-binding</keyword>
<keyword id="KW-0699">rRNA-binding</keyword>
<keyword id="KW-0810">Translation regulation</keyword>
<keyword id="KW-0820">tRNA-binding</keyword>
<sequence>MVEKSVLIDALKKAKEQAPERKFTESVDMTINLKNIDMSQPKNRIDETILLPHGNGRVVKIAVLGSGDIVTQARESGVELIMGPEEIERLGGAPREARKIASEHQFFLAETQVMSLVGRWLGPRLGPRGRMPQPIPAGTDIRPIVERLRKSVKIRTKDKMSFSLKVGTTAMSEEEIAENIDAVLKRILSKLEMGDFQVRSVYIKTTMGPSVKVEL</sequence>
<accession>Q2FQ32</accession>
<feature type="chain" id="PRO_0000308151" description="Large ribosomal subunit protein uL1">
    <location>
        <begin position="1"/>
        <end position="215"/>
    </location>
</feature>
<protein>
    <recommendedName>
        <fullName evidence="1">Large ribosomal subunit protein uL1</fullName>
    </recommendedName>
    <alternativeName>
        <fullName evidence="2">50S ribosomal protein L1</fullName>
    </alternativeName>
</protein>
<proteinExistence type="inferred from homology"/>
<name>RL1_METHJ</name>
<gene>
    <name evidence="1" type="primary">rpl1</name>
    <name type="ordered locus">Mhun_0656</name>
</gene>
<comment type="function">
    <text evidence="1">Binds directly to 23S rRNA. Probably involved in E site tRNA release.</text>
</comment>
<comment type="function">
    <text evidence="1">Protein L1 is also a translational repressor protein, it controls the translation of its operon by binding to its mRNA.</text>
</comment>
<comment type="subunit">
    <text evidence="1">Part of the 50S ribosomal subunit.</text>
</comment>
<comment type="similarity">
    <text evidence="1">Belongs to the universal ribosomal protein uL1 family.</text>
</comment>